<keyword id="KW-0256">Endoplasmic reticulum</keyword>
<keyword id="KW-0472">Membrane</keyword>
<keyword id="KW-1267">Proteomics identification</keyword>
<keyword id="KW-1185">Reference proteome</keyword>
<keyword id="KW-0812">Transmembrane</keyword>
<keyword id="KW-1133">Transmembrane helix</keyword>
<evidence type="ECO:0000255" key="1"/>
<evidence type="ECO:0000256" key="2">
    <source>
        <dbReference type="SAM" id="MobiDB-lite"/>
    </source>
</evidence>
<evidence type="ECO:0000269" key="3">
    <source>
    </source>
</evidence>
<evidence type="ECO:0000269" key="4">
    <source>
    </source>
</evidence>
<evidence type="ECO:0000303" key="5">
    <source>
    </source>
</evidence>
<evidence type="ECO:0000305" key="6"/>
<evidence type="ECO:0000305" key="7">
    <source>
    </source>
</evidence>
<evidence type="ECO:0000305" key="8">
    <source>
    </source>
</evidence>
<evidence type="ECO:0000312" key="9">
    <source>
        <dbReference type="HGNC" id="HGNC:30526"/>
    </source>
</evidence>
<proteinExistence type="evidence at protein level"/>
<dbReference type="EMBL" id="AC099667">
    <property type="status" value="NOT_ANNOTATED_CDS"/>
    <property type="molecule type" value="Genomic_DNA"/>
</dbReference>
<dbReference type="EMBL" id="BC047015">
    <property type="protein sequence ID" value="AAH47015.1"/>
    <property type="molecule type" value="mRNA"/>
</dbReference>
<dbReference type="CCDS" id="CCDS2866.1"/>
<dbReference type="RefSeq" id="NP_940965.1">
    <property type="nucleotide sequence ID" value="NM_198563.5"/>
</dbReference>
<dbReference type="BioGRID" id="131975">
    <property type="interactions" value="5"/>
</dbReference>
<dbReference type="FunCoup" id="Q86TL2">
    <property type="interactions" value="314"/>
</dbReference>
<dbReference type="IntAct" id="Q86TL2">
    <property type="interactions" value="3"/>
</dbReference>
<dbReference type="MINT" id="Q86TL2"/>
<dbReference type="STRING" id="9606.ENSP00000347195"/>
<dbReference type="TCDB" id="8.A.65.1.1">
    <property type="family name" value="the endoplasmic reticulum (er)-plasma membrane (pm) junctional competence regulator (tmem110) family"/>
</dbReference>
<dbReference type="GlyGen" id="Q86TL2">
    <property type="glycosylation" value="2 sites, 1 O-linked glycan (1 site)"/>
</dbReference>
<dbReference type="iPTMnet" id="Q86TL2"/>
<dbReference type="PhosphoSitePlus" id="Q86TL2"/>
<dbReference type="SwissPalm" id="Q86TL2"/>
<dbReference type="BioMuta" id="TMEM110"/>
<dbReference type="jPOST" id="Q86TL2"/>
<dbReference type="MassIVE" id="Q86TL2"/>
<dbReference type="PaxDb" id="9606-ENSP00000347195"/>
<dbReference type="PeptideAtlas" id="Q86TL2"/>
<dbReference type="ProteomicsDB" id="69711"/>
<dbReference type="Antibodypedia" id="55365">
    <property type="antibodies" value="38 antibodies from 13 providers"/>
</dbReference>
<dbReference type="DNASU" id="375346"/>
<dbReference type="Ensembl" id="ENST00000355083.11">
    <property type="protein sequence ID" value="ENSP00000347195.5"/>
    <property type="gene ID" value="ENSG00000213533.13"/>
</dbReference>
<dbReference type="GeneID" id="375346"/>
<dbReference type="KEGG" id="hsa:375346"/>
<dbReference type="MANE-Select" id="ENST00000355083.11">
    <property type="protein sequence ID" value="ENSP00000347195.5"/>
    <property type="RefSeq nucleotide sequence ID" value="NM_198563.5"/>
    <property type="RefSeq protein sequence ID" value="NP_940965.1"/>
</dbReference>
<dbReference type="UCSC" id="uc062kra.1">
    <property type="organism name" value="human"/>
</dbReference>
<dbReference type="AGR" id="HGNC:30526"/>
<dbReference type="CTD" id="375346"/>
<dbReference type="DisGeNET" id="375346"/>
<dbReference type="GeneCards" id="STIMATE"/>
<dbReference type="HGNC" id="HGNC:30526">
    <property type="gene designation" value="STIMATE"/>
</dbReference>
<dbReference type="HPA" id="ENSG00000213533">
    <property type="expression patterns" value="Low tissue specificity"/>
</dbReference>
<dbReference type="neXtProt" id="NX_Q86TL2"/>
<dbReference type="OpenTargets" id="ENSG00000213533"/>
<dbReference type="PharmGKB" id="PA142670761"/>
<dbReference type="VEuPathDB" id="HostDB:ENSG00000213533"/>
<dbReference type="eggNOG" id="ENOG502S1HE">
    <property type="taxonomic scope" value="Eukaryota"/>
</dbReference>
<dbReference type="GeneTree" id="ENSGT00940000153920"/>
<dbReference type="HOGENOM" id="CLU_040321_1_0_1"/>
<dbReference type="InParanoid" id="Q86TL2"/>
<dbReference type="OMA" id="PWISKAG"/>
<dbReference type="OrthoDB" id="431202at2759"/>
<dbReference type="PAN-GO" id="Q86TL2">
    <property type="GO annotations" value="5 GO annotations based on evolutionary models"/>
</dbReference>
<dbReference type="PhylomeDB" id="Q86TL2"/>
<dbReference type="TreeFam" id="TF324457"/>
<dbReference type="PathwayCommons" id="Q86TL2"/>
<dbReference type="SignaLink" id="Q86TL2"/>
<dbReference type="BioGRID-ORCS" id="375346">
    <property type="hits" value="9 hits in 1060 CRISPR screens"/>
</dbReference>
<dbReference type="GenomeRNAi" id="375346"/>
<dbReference type="Pharos" id="Q86TL2">
    <property type="development level" value="Tbio"/>
</dbReference>
<dbReference type="PRO" id="PR:Q86TL2"/>
<dbReference type="Proteomes" id="UP000005640">
    <property type="component" value="Chromosome 3"/>
</dbReference>
<dbReference type="RNAct" id="Q86TL2">
    <property type="molecule type" value="protein"/>
</dbReference>
<dbReference type="Bgee" id="ENSG00000213533">
    <property type="expression patterns" value="Expressed in right lobe of liver and 102 other cell types or tissues"/>
</dbReference>
<dbReference type="ExpressionAtlas" id="Q86TL2">
    <property type="expression patterns" value="baseline and differential"/>
</dbReference>
<dbReference type="GO" id="GO:0032541">
    <property type="term" value="C:cortical endoplasmic reticulum"/>
    <property type="evidence" value="ECO:0000314"/>
    <property type="project" value="UniProtKB"/>
</dbReference>
<dbReference type="GO" id="GO:0005789">
    <property type="term" value="C:endoplasmic reticulum membrane"/>
    <property type="evidence" value="ECO:0000314"/>
    <property type="project" value="UniProtKB"/>
</dbReference>
<dbReference type="GO" id="GO:0140268">
    <property type="term" value="C:endoplasmic reticulum-plasma membrane contact site"/>
    <property type="evidence" value="ECO:0000314"/>
    <property type="project" value="UniProtKB"/>
</dbReference>
<dbReference type="GO" id="GO:0016020">
    <property type="term" value="C:membrane"/>
    <property type="evidence" value="ECO:0000318"/>
    <property type="project" value="GO_Central"/>
</dbReference>
<dbReference type="GO" id="GO:0005246">
    <property type="term" value="F:calcium channel regulator activity"/>
    <property type="evidence" value="ECO:0000314"/>
    <property type="project" value="UniProtKB"/>
</dbReference>
<dbReference type="GO" id="GO:0032237">
    <property type="term" value="P:activation of store-operated calcium channel activity"/>
    <property type="evidence" value="ECO:0000314"/>
    <property type="project" value="UniProtKB"/>
</dbReference>
<dbReference type="GO" id="GO:0002115">
    <property type="term" value="P:store-operated calcium entry"/>
    <property type="evidence" value="ECO:0000314"/>
    <property type="project" value="UniProtKB"/>
</dbReference>
<dbReference type="InterPro" id="IPR022127">
    <property type="entry name" value="STIMATE/YPL162C"/>
</dbReference>
<dbReference type="PANTHER" id="PTHR31735:SF2">
    <property type="entry name" value="STORE-OPERATED CALCIUM ENTRY REGULATOR STIMATE"/>
    <property type="match status" value="1"/>
</dbReference>
<dbReference type="PANTHER" id="PTHR31735">
    <property type="entry name" value="VACUOLAR MEMBRANE PROTEIN YPL162C"/>
    <property type="match status" value="1"/>
</dbReference>
<dbReference type="Pfam" id="PF12400">
    <property type="entry name" value="STIMATE"/>
    <property type="match status" value="1"/>
</dbReference>
<feature type="chain" id="PRO_0000243915" description="Store-operated calcium entry regulator STIMATE">
    <location>
        <begin position="1"/>
        <end position="294"/>
    </location>
</feature>
<feature type="topological domain" description="Cytoplasmic" evidence="7 8">
    <location>
        <begin position="1"/>
        <end position="28"/>
    </location>
</feature>
<feature type="transmembrane region" description="Helical" evidence="1">
    <location>
        <begin position="29"/>
        <end position="49"/>
    </location>
</feature>
<feature type="transmembrane region" description="Helical" evidence="1">
    <location>
        <begin position="69"/>
        <end position="89"/>
    </location>
</feature>
<feature type="transmembrane region" description="Helical" evidence="1">
    <location>
        <begin position="102"/>
        <end position="122"/>
    </location>
</feature>
<feature type="transmembrane region" description="Helical" evidence="1">
    <location>
        <begin position="156"/>
        <end position="176"/>
    </location>
</feature>
<feature type="transmembrane region" description="Helical" evidence="1">
    <location>
        <begin position="194"/>
        <end position="214"/>
    </location>
</feature>
<feature type="topological domain" description="Cytoplasmic" evidence="7 8">
    <location>
        <begin position="215"/>
        <end position="294"/>
    </location>
</feature>
<feature type="region of interest" description="Disordered" evidence="2">
    <location>
        <begin position="1"/>
        <end position="22"/>
    </location>
</feature>
<feature type="region of interest" description="Disordered" evidence="2">
    <location>
        <begin position="227"/>
        <end position="268"/>
    </location>
</feature>
<feature type="region of interest" description="Required for localization in the endoplasmic reticulum" evidence="3">
    <location>
        <begin position="241"/>
        <end position="246"/>
    </location>
</feature>
<feature type="short sequence motif" description="GXXXG motif" evidence="5">
    <location>
        <begin position="149"/>
        <end position="153"/>
    </location>
</feature>
<feature type="mutagenesis site" description="Induces relocalization to cell membrane." evidence="3">
    <original>KVRYRR</original>
    <variation>QVQYQQ</variation>
    <location>
        <begin position="241"/>
        <end position="246"/>
    </location>
</feature>
<protein>
    <recommendedName>
        <fullName evidence="7">Store-operated calcium entry regulator STIMATE</fullName>
    </recommendedName>
    <alternativeName>
        <fullName evidence="5">STIM-activating enhancer encoded by TMEM110</fullName>
    </alternativeName>
    <alternativeName>
        <fullName evidence="6">Transmembrane protein 110</fullName>
    </alternativeName>
</protein>
<name>STIMA_HUMAN</name>
<accession>Q86TL2</accession>
<sequence length="294" mass="33187">MQGPAGNASRGLPGGPPSTVASGAGRCESGALMHSFGIFLQGLLGVVAFSTLMLKRFREPKHERRPWRIWFLDTSKQAIGMLFIHFANVYLADLTEEDPCSLYLINFLLDATVGMLLIYVGVRAVSVLVEWQQWESLRFGEYGDPLQCGAWVGQCALYIVIMIFEKSVVFIVLLILQWKKVALLNPIENPDLKLAIVMLIVPFFVNALMFWVVDNFLMRKGKTKAKLEERGANQDSRNGSKVRYRRAASHEESESEILISADDEMEESDVEEDLRRLTPLKPVKKKKHRFGLPV</sequence>
<reference key="1">
    <citation type="journal article" date="2006" name="Nature">
        <title>The DNA sequence, annotation and analysis of human chromosome 3.</title>
        <authorList>
            <person name="Muzny D.M."/>
            <person name="Scherer S.E."/>
            <person name="Kaul R."/>
            <person name="Wang J."/>
            <person name="Yu J."/>
            <person name="Sudbrak R."/>
            <person name="Buhay C.J."/>
            <person name="Chen R."/>
            <person name="Cree A."/>
            <person name="Ding Y."/>
            <person name="Dugan-Rocha S."/>
            <person name="Gill R."/>
            <person name="Gunaratne P."/>
            <person name="Harris R.A."/>
            <person name="Hawes A.C."/>
            <person name="Hernandez J."/>
            <person name="Hodgson A.V."/>
            <person name="Hume J."/>
            <person name="Jackson A."/>
            <person name="Khan Z.M."/>
            <person name="Kovar-Smith C."/>
            <person name="Lewis L.R."/>
            <person name="Lozado R.J."/>
            <person name="Metzker M.L."/>
            <person name="Milosavljevic A."/>
            <person name="Miner G.R."/>
            <person name="Morgan M.B."/>
            <person name="Nazareth L.V."/>
            <person name="Scott G."/>
            <person name="Sodergren E."/>
            <person name="Song X.-Z."/>
            <person name="Steffen D."/>
            <person name="Wei S."/>
            <person name="Wheeler D.A."/>
            <person name="Wright M.W."/>
            <person name="Worley K.C."/>
            <person name="Yuan Y."/>
            <person name="Zhang Z."/>
            <person name="Adams C.Q."/>
            <person name="Ansari-Lari M.A."/>
            <person name="Ayele M."/>
            <person name="Brown M.J."/>
            <person name="Chen G."/>
            <person name="Chen Z."/>
            <person name="Clendenning J."/>
            <person name="Clerc-Blankenburg K.P."/>
            <person name="Chen R."/>
            <person name="Chen Z."/>
            <person name="Davis C."/>
            <person name="Delgado O."/>
            <person name="Dinh H.H."/>
            <person name="Dong W."/>
            <person name="Draper H."/>
            <person name="Ernst S."/>
            <person name="Fu G."/>
            <person name="Gonzalez-Garay M.L."/>
            <person name="Garcia D.K."/>
            <person name="Gillett W."/>
            <person name="Gu J."/>
            <person name="Hao B."/>
            <person name="Haugen E."/>
            <person name="Havlak P."/>
            <person name="He X."/>
            <person name="Hennig S."/>
            <person name="Hu S."/>
            <person name="Huang W."/>
            <person name="Jackson L.R."/>
            <person name="Jacob L.S."/>
            <person name="Kelly S.H."/>
            <person name="Kube M."/>
            <person name="Levy R."/>
            <person name="Li Z."/>
            <person name="Liu B."/>
            <person name="Liu J."/>
            <person name="Liu W."/>
            <person name="Lu J."/>
            <person name="Maheshwari M."/>
            <person name="Nguyen B.-V."/>
            <person name="Okwuonu G.O."/>
            <person name="Palmeiri A."/>
            <person name="Pasternak S."/>
            <person name="Perez L.M."/>
            <person name="Phelps K.A."/>
            <person name="Plopper F.J."/>
            <person name="Qiang B."/>
            <person name="Raymond C."/>
            <person name="Rodriguez R."/>
            <person name="Saenphimmachak C."/>
            <person name="Santibanez J."/>
            <person name="Shen H."/>
            <person name="Shen Y."/>
            <person name="Subramanian S."/>
            <person name="Tabor P.E."/>
            <person name="Verduzco D."/>
            <person name="Waldron L."/>
            <person name="Wang J."/>
            <person name="Wang J."/>
            <person name="Wang Q."/>
            <person name="Williams G.A."/>
            <person name="Wong G.K.-S."/>
            <person name="Yao Z."/>
            <person name="Zhang J."/>
            <person name="Zhang X."/>
            <person name="Zhao G."/>
            <person name="Zhou J."/>
            <person name="Zhou Y."/>
            <person name="Nelson D."/>
            <person name="Lehrach H."/>
            <person name="Reinhardt R."/>
            <person name="Naylor S.L."/>
            <person name="Yang H."/>
            <person name="Olson M."/>
            <person name="Weinstock G."/>
            <person name="Gibbs R.A."/>
        </authorList>
    </citation>
    <scope>NUCLEOTIDE SEQUENCE [LARGE SCALE GENOMIC DNA]</scope>
</reference>
<reference key="2">
    <citation type="journal article" date="2004" name="Genome Res.">
        <title>The status, quality, and expansion of the NIH full-length cDNA project: the Mammalian Gene Collection (MGC).</title>
        <authorList>
            <consortium name="The MGC Project Team"/>
        </authorList>
    </citation>
    <scope>NUCLEOTIDE SEQUENCE [LARGE SCALE MRNA]</scope>
    <source>
        <tissue>Brain</tissue>
    </source>
</reference>
<reference key="3">
    <citation type="journal article" date="2015" name="Nat. Cell Biol.">
        <title>Proteomic mapping of ER-PM junctions identifies STIMATE as a regulator of Ca(2+) influx.</title>
        <authorList>
            <person name="Jing J."/>
            <person name="He L."/>
            <person name="Sun A."/>
            <person name="Quintana A."/>
            <person name="Ding Y."/>
            <person name="Ma G."/>
            <person name="Tan P."/>
            <person name="Liang X."/>
            <person name="Zheng X."/>
            <person name="Chen L."/>
            <person name="Shi X."/>
            <person name="Zhang S.L."/>
            <person name="Zhong L."/>
            <person name="Huang Y."/>
            <person name="Dong M.Q."/>
            <person name="Walker C.L."/>
            <person name="Hogan P.G."/>
            <person name="Wang Y."/>
            <person name="Zhou Y."/>
        </authorList>
    </citation>
    <scope>FUNCTION</scope>
    <scope>SUBCELLULAR LOCATION</scope>
    <scope>INDUCTION BY STIM1</scope>
    <scope>TISSUE SPECIFICITY</scope>
    <scope>MUTAGENESIS OF 241-LYS--ARG-246</scope>
</reference>
<reference key="4">
    <citation type="journal article" date="2015" name="Proc. Natl. Acad. Sci. U.S.A.">
        <title>TMEM110 regulates the maintenance and remodeling of mammalian ER-plasma membrane junctions competent for STIM-ORAI signaling.</title>
        <authorList>
            <person name="Quintana A."/>
            <person name="Rajanikanth V."/>
            <person name="Farber-Katz S."/>
            <person name="Gudlur A."/>
            <person name="Zhang C."/>
            <person name="Jing J."/>
            <person name="Zhou Y."/>
            <person name="Rao A."/>
            <person name="Hogan P.G."/>
        </authorList>
    </citation>
    <scope>FUNCTION</scope>
    <scope>TOPOLOGY</scope>
    <scope>SUBCELLULAR LOCATION</scope>
    <scope>DOMAIN</scope>
</reference>
<organism>
    <name type="scientific">Homo sapiens</name>
    <name type="common">Human</name>
    <dbReference type="NCBI Taxonomy" id="9606"/>
    <lineage>
        <taxon>Eukaryota</taxon>
        <taxon>Metazoa</taxon>
        <taxon>Chordata</taxon>
        <taxon>Craniata</taxon>
        <taxon>Vertebrata</taxon>
        <taxon>Euteleostomi</taxon>
        <taxon>Mammalia</taxon>
        <taxon>Eutheria</taxon>
        <taxon>Euarchontoglires</taxon>
        <taxon>Primates</taxon>
        <taxon>Haplorrhini</taxon>
        <taxon>Catarrhini</taxon>
        <taxon>Hominidae</taxon>
        <taxon>Homo</taxon>
    </lineage>
</organism>
<gene>
    <name evidence="9" type="primary">STIMATE</name>
    <name evidence="9" type="synonym">TMEM110</name>
</gene>
<comment type="function">
    <text evidence="3 4">Acts as a regulator of store-operated Ca(2+) entry (SOCE) at junctional sites that connect the endoplasmic reticulum (ER) and plasma membrane (PM), called ER-plasma membrane (ER-PM) junction or cortical ER (PubMed:26322679, PubMed:26644574). SOCE is a Ca(2+) influx following depletion of intracellular Ca(2+) stores (PubMed:26322679). Acts by interacting with STIM1, promoting STIM1 conformational switch (PubMed:26322679). Involved in STIM1 relocalization to ER-PM junctions (PubMed:26644574). Contributes to the maintenance and reorganization of store-dependent ER-PM junctions (PubMed:26644574).</text>
</comment>
<comment type="subunit">
    <text evidence="3">Homooligomer (PubMed:26322679). Interacts with STIM1 (PubMed:26322679).</text>
</comment>
<comment type="subcellular location">
    <subcellularLocation>
        <location evidence="3 4">Endoplasmic reticulum membrane</location>
        <topology evidence="3 4">Multi-pass membrane protein</topology>
    </subcellularLocation>
    <text evidence="4 7">Colocalizes with STIM1 at ER-plasma membrane (ER-PM) junctions, also called cortical endoplasmic reticulum (ER), in store-depleted calcium cells (PubMed:26644574). May translocate to ER-PM junctions in a STIM1-dependent manner in store-depleted cells (Probable).</text>
</comment>
<comment type="tissue specificity">
    <text evidence="3">Widely expressed.</text>
</comment>
<comment type="domain">
    <text evidence="4 5">The GXXXG motif may mediate oligomerization (PubMed:26322679). The C-terminus is necessary for its localization at ER-plasma membrane (ER-PM) junctions as well as for the store-dependent rearrangement of ER-PM junctions (PubMed:26644574).</text>
</comment>
<comment type="similarity">
    <text evidence="6">Belongs to the STIMATE family.</text>
</comment>